<proteinExistence type="inferred from homology"/>
<organism>
    <name type="scientific">Chlamydia muridarum (strain MoPn / Nigg)</name>
    <dbReference type="NCBI Taxonomy" id="243161"/>
    <lineage>
        <taxon>Bacteria</taxon>
        <taxon>Pseudomonadati</taxon>
        <taxon>Chlamydiota</taxon>
        <taxon>Chlamydiia</taxon>
        <taxon>Chlamydiales</taxon>
        <taxon>Chlamydiaceae</taxon>
        <taxon>Chlamydia/Chlamydophila group</taxon>
        <taxon>Chlamydia</taxon>
    </lineage>
</organism>
<protein>
    <recommendedName>
        <fullName evidence="1">Methionyl-tRNA formyltransferase</fullName>
        <ecNumber evidence="1">2.1.2.9</ecNumber>
    </recommendedName>
</protein>
<dbReference type="EC" id="2.1.2.9" evidence="1"/>
<dbReference type="EMBL" id="AE002160">
    <property type="protein sequence ID" value="AAF39619.1"/>
    <property type="molecule type" value="Genomic_DNA"/>
</dbReference>
<dbReference type="PIR" id="F81661">
    <property type="entry name" value="F81661"/>
</dbReference>
<dbReference type="SMR" id="Q9PJL2"/>
<dbReference type="KEGG" id="cmu:TC_0817"/>
<dbReference type="eggNOG" id="COG0223">
    <property type="taxonomic scope" value="Bacteria"/>
</dbReference>
<dbReference type="HOGENOM" id="CLU_033347_1_1_0"/>
<dbReference type="Proteomes" id="UP000000800">
    <property type="component" value="Chromosome"/>
</dbReference>
<dbReference type="GO" id="GO:0005829">
    <property type="term" value="C:cytosol"/>
    <property type="evidence" value="ECO:0007669"/>
    <property type="project" value="TreeGrafter"/>
</dbReference>
<dbReference type="GO" id="GO:0004479">
    <property type="term" value="F:methionyl-tRNA formyltransferase activity"/>
    <property type="evidence" value="ECO:0007669"/>
    <property type="project" value="UniProtKB-UniRule"/>
</dbReference>
<dbReference type="CDD" id="cd08646">
    <property type="entry name" value="FMT_core_Met-tRNA-FMT_N"/>
    <property type="match status" value="1"/>
</dbReference>
<dbReference type="CDD" id="cd08704">
    <property type="entry name" value="Met_tRNA_FMT_C"/>
    <property type="match status" value="1"/>
</dbReference>
<dbReference type="Gene3D" id="3.40.50.12230">
    <property type="match status" value="1"/>
</dbReference>
<dbReference type="HAMAP" id="MF_00182">
    <property type="entry name" value="Formyl_trans"/>
    <property type="match status" value="1"/>
</dbReference>
<dbReference type="InterPro" id="IPR005794">
    <property type="entry name" value="Fmt"/>
</dbReference>
<dbReference type="InterPro" id="IPR005793">
    <property type="entry name" value="Formyl_trans_C"/>
</dbReference>
<dbReference type="InterPro" id="IPR002376">
    <property type="entry name" value="Formyl_transf_N"/>
</dbReference>
<dbReference type="InterPro" id="IPR036477">
    <property type="entry name" value="Formyl_transf_N_sf"/>
</dbReference>
<dbReference type="InterPro" id="IPR011034">
    <property type="entry name" value="Formyl_transferase-like_C_sf"/>
</dbReference>
<dbReference type="InterPro" id="IPR001555">
    <property type="entry name" value="GART_AS"/>
</dbReference>
<dbReference type="InterPro" id="IPR044135">
    <property type="entry name" value="Met-tRNA-FMT_C"/>
</dbReference>
<dbReference type="InterPro" id="IPR041711">
    <property type="entry name" value="Met-tRNA-FMT_N"/>
</dbReference>
<dbReference type="NCBIfam" id="TIGR00460">
    <property type="entry name" value="fmt"/>
    <property type="match status" value="1"/>
</dbReference>
<dbReference type="PANTHER" id="PTHR11138">
    <property type="entry name" value="METHIONYL-TRNA FORMYLTRANSFERASE"/>
    <property type="match status" value="1"/>
</dbReference>
<dbReference type="PANTHER" id="PTHR11138:SF5">
    <property type="entry name" value="METHIONYL-TRNA FORMYLTRANSFERASE, MITOCHONDRIAL"/>
    <property type="match status" value="1"/>
</dbReference>
<dbReference type="Pfam" id="PF02911">
    <property type="entry name" value="Formyl_trans_C"/>
    <property type="match status" value="1"/>
</dbReference>
<dbReference type="Pfam" id="PF00551">
    <property type="entry name" value="Formyl_trans_N"/>
    <property type="match status" value="1"/>
</dbReference>
<dbReference type="SUPFAM" id="SSF50486">
    <property type="entry name" value="FMT C-terminal domain-like"/>
    <property type="match status" value="1"/>
</dbReference>
<dbReference type="SUPFAM" id="SSF53328">
    <property type="entry name" value="Formyltransferase"/>
    <property type="match status" value="1"/>
</dbReference>
<dbReference type="PROSITE" id="PS00373">
    <property type="entry name" value="GART"/>
    <property type="match status" value="1"/>
</dbReference>
<gene>
    <name evidence="1" type="primary">fmt</name>
    <name type="ordered locus">TC_0817</name>
</gene>
<accession>Q9PJL2</accession>
<evidence type="ECO:0000255" key="1">
    <source>
        <dbReference type="HAMAP-Rule" id="MF_00182"/>
    </source>
</evidence>
<evidence type="ECO:0000305" key="2"/>
<keyword id="KW-0648">Protein biosynthesis</keyword>
<keyword id="KW-0808">Transferase</keyword>
<comment type="function">
    <text evidence="1">Attaches a formyl group to the free amino group of methionyl-tRNA(fMet). The formyl group appears to play a dual role in the initiator identity of N-formylmethionyl-tRNA by promoting its recognition by IF2 and preventing the misappropriation of this tRNA by the elongation apparatus.</text>
</comment>
<comment type="catalytic activity">
    <reaction evidence="1">
        <text>L-methionyl-tRNA(fMet) + (6R)-10-formyltetrahydrofolate = N-formyl-L-methionyl-tRNA(fMet) + (6S)-5,6,7,8-tetrahydrofolate + H(+)</text>
        <dbReference type="Rhea" id="RHEA:24380"/>
        <dbReference type="Rhea" id="RHEA-COMP:9952"/>
        <dbReference type="Rhea" id="RHEA-COMP:9953"/>
        <dbReference type="ChEBI" id="CHEBI:15378"/>
        <dbReference type="ChEBI" id="CHEBI:57453"/>
        <dbReference type="ChEBI" id="CHEBI:78530"/>
        <dbReference type="ChEBI" id="CHEBI:78844"/>
        <dbReference type="ChEBI" id="CHEBI:195366"/>
        <dbReference type="EC" id="2.1.2.9"/>
    </reaction>
</comment>
<comment type="similarity">
    <text evidence="1 2">Belongs to the Fmt family.</text>
</comment>
<feature type="chain" id="PRO_0000082944" description="Methionyl-tRNA formyltransferase">
    <location>
        <begin position="1"/>
        <end position="316"/>
    </location>
</feature>
<feature type="binding site" evidence="1">
    <location>
        <begin position="112"/>
        <end position="115"/>
    </location>
    <ligand>
        <name>(6S)-5,6,7,8-tetrahydrofolate</name>
        <dbReference type="ChEBI" id="CHEBI:57453"/>
    </ligand>
</feature>
<reference key="1">
    <citation type="journal article" date="2000" name="Nucleic Acids Res.">
        <title>Genome sequences of Chlamydia trachomatis MoPn and Chlamydia pneumoniae AR39.</title>
        <authorList>
            <person name="Read T.D."/>
            <person name="Brunham R.C."/>
            <person name="Shen C."/>
            <person name="Gill S.R."/>
            <person name="Heidelberg J.F."/>
            <person name="White O."/>
            <person name="Hickey E.K."/>
            <person name="Peterson J.D."/>
            <person name="Utterback T.R."/>
            <person name="Berry K.J."/>
            <person name="Bass S."/>
            <person name="Linher K.D."/>
            <person name="Weidman J.F."/>
            <person name="Khouri H.M."/>
            <person name="Craven B."/>
            <person name="Bowman C."/>
            <person name="Dodson R.J."/>
            <person name="Gwinn M.L."/>
            <person name="Nelson W.C."/>
            <person name="DeBoy R.T."/>
            <person name="Kolonay J.F."/>
            <person name="McClarty G."/>
            <person name="Salzberg S.L."/>
            <person name="Eisen J.A."/>
            <person name="Fraser C.M."/>
        </authorList>
    </citation>
    <scope>NUCLEOTIDE SEQUENCE [LARGE SCALE GENOMIC DNA]</scope>
    <source>
        <strain>MoPn / Nigg</strain>
    </source>
</reference>
<name>FMT_CHLMU</name>
<sequence length="316" mass="33880">MLNLRVVYLGTPQFAATVLETLVDARIHVVGVVTRADKPQKRSSKPIASPVKQLALSKNIPLLQPTKTTDPAFLAQLREWQADVFVVVAYGVILKQELLDIPKYGCYNLHAGLLPAYRGAAPIQRCIIAGETLSGNTVIRMDAGMDTGDIANVNHVAIGEDMTAGELAEALAGSGGELILKTLQEIEAGTVRHIPQDSAKATLAPKLTKEEGLVKWDAPASQVYAHIRGVSPAPGAWTRFLSQGKEPRRLGILSARMESSSGSHSPGEVLGVSGEDLLVACRQGVLRLCIVQPEGKVFMKAKDFFNGQSRSVALLF</sequence>